<keyword id="KW-0050">Antiport</keyword>
<keyword id="KW-0997">Cell inner membrane</keyword>
<keyword id="KW-1003">Cell membrane</keyword>
<keyword id="KW-0472">Membrane</keyword>
<keyword id="KW-0812">Transmembrane</keyword>
<keyword id="KW-1133">Transmembrane helix</keyword>
<keyword id="KW-0813">Transport</keyword>
<dbReference type="EMBL" id="CP000247">
    <property type="protein sequence ID" value="ABG68082.1"/>
    <property type="molecule type" value="Genomic_DNA"/>
</dbReference>
<dbReference type="RefSeq" id="WP_000787104.1">
    <property type="nucleotide sequence ID" value="NC_008253.1"/>
</dbReference>
<dbReference type="SMR" id="Q0TLU9"/>
<dbReference type="KEGG" id="ecp:ECP_0040"/>
<dbReference type="HOGENOM" id="CLU_010118_6_0_6"/>
<dbReference type="UniPathway" id="UPA00117"/>
<dbReference type="Proteomes" id="UP000009182">
    <property type="component" value="Chromosome"/>
</dbReference>
<dbReference type="GO" id="GO:0005886">
    <property type="term" value="C:plasma membrane"/>
    <property type="evidence" value="ECO:0007669"/>
    <property type="project" value="UniProtKB-SubCell"/>
</dbReference>
<dbReference type="GO" id="GO:0044667">
    <property type="term" value="F:(R)-carnitine:4-(trimethylammonio)butanoate antiporter activity"/>
    <property type="evidence" value="ECO:0007669"/>
    <property type="project" value="UniProtKB-UniRule"/>
</dbReference>
<dbReference type="GO" id="GO:1900751">
    <property type="term" value="P:4-(trimethylammonio)butanoate transport"/>
    <property type="evidence" value="ECO:0007669"/>
    <property type="project" value="InterPro"/>
</dbReference>
<dbReference type="GO" id="GO:0009437">
    <property type="term" value="P:carnitine metabolic process"/>
    <property type="evidence" value="ECO:0007669"/>
    <property type="project" value="UniProtKB-UniRule"/>
</dbReference>
<dbReference type="HAMAP" id="MF_01049">
    <property type="entry name" value="CaiT"/>
    <property type="match status" value="1"/>
</dbReference>
<dbReference type="InterPro" id="IPR018093">
    <property type="entry name" value="BCCT_CS"/>
</dbReference>
<dbReference type="InterPro" id="IPR000060">
    <property type="entry name" value="BCCT_transptr"/>
</dbReference>
<dbReference type="InterPro" id="IPR023449">
    <property type="entry name" value="BCCT_transptr_CaiT"/>
</dbReference>
<dbReference type="NCBIfam" id="TIGR00842">
    <property type="entry name" value="bcct"/>
    <property type="match status" value="1"/>
</dbReference>
<dbReference type="NCBIfam" id="NF002887">
    <property type="entry name" value="PRK03356.1"/>
    <property type="match status" value="1"/>
</dbReference>
<dbReference type="PANTHER" id="PTHR30047">
    <property type="entry name" value="HIGH-AFFINITY CHOLINE TRANSPORT PROTEIN-RELATED"/>
    <property type="match status" value="1"/>
</dbReference>
<dbReference type="PANTHER" id="PTHR30047:SF11">
    <property type="entry name" value="L-CARNITINE_GAMMA-BUTYROBETAINE ANTIPORTER"/>
    <property type="match status" value="1"/>
</dbReference>
<dbReference type="Pfam" id="PF02028">
    <property type="entry name" value="BCCT"/>
    <property type="match status" value="1"/>
</dbReference>
<dbReference type="PROSITE" id="PS01303">
    <property type="entry name" value="BCCT"/>
    <property type="match status" value="1"/>
</dbReference>
<proteinExistence type="inferred from homology"/>
<feature type="chain" id="PRO_1000064331" description="L-carnitine/gamma-butyrobetaine antiporter">
    <location>
        <begin position="1"/>
        <end position="504"/>
    </location>
</feature>
<feature type="transmembrane region" description="Helical" evidence="1">
    <location>
        <begin position="10"/>
        <end position="30"/>
    </location>
</feature>
<feature type="transmembrane region" description="Helical" evidence="1">
    <location>
        <begin position="51"/>
        <end position="71"/>
    </location>
</feature>
<feature type="transmembrane region" description="Helical" evidence="1">
    <location>
        <begin position="92"/>
        <end position="112"/>
    </location>
</feature>
<feature type="transmembrane region" description="Helical" evidence="1">
    <location>
        <begin position="143"/>
        <end position="163"/>
    </location>
</feature>
<feature type="transmembrane region" description="Helical" evidence="1">
    <location>
        <begin position="195"/>
        <end position="215"/>
    </location>
</feature>
<feature type="transmembrane region" description="Helical" evidence="1">
    <location>
        <begin position="231"/>
        <end position="251"/>
    </location>
</feature>
<feature type="transmembrane region" description="Helical" evidence="1">
    <location>
        <begin position="263"/>
        <end position="283"/>
    </location>
</feature>
<feature type="transmembrane region" description="Helical" evidence="1">
    <location>
        <begin position="316"/>
        <end position="336"/>
    </location>
</feature>
<feature type="transmembrane region" description="Helical" evidence="1">
    <location>
        <begin position="347"/>
        <end position="367"/>
    </location>
</feature>
<feature type="transmembrane region" description="Helical" evidence="1">
    <location>
        <begin position="398"/>
        <end position="418"/>
    </location>
</feature>
<feature type="transmembrane region" description="Helical" evidence="1">
    <location>
        <begin position="446"/>
        <end position="466"/>
    </location>
</feature>
<feature type="transmembrane region" description="Helical" evidence="1">
    <location>
        <begin position="475"/>
        <end position="495"/>
    </location>
</feature>
<comment type="function">
    <text evidence="1">Catalyzes the exchange of L-carnitine for gamma-butyrobetaine.</text>
</comment>
<comment type="catalytic activity">
    <reaction evidence="1">
        <text>4-(trimethylamino)butanoate(in) + (R)-carnitine(out) = 4-(trimethylamino)butanoate(out) + (R)-carnitine(in)</text>
        <dbReference type="Rhea" id="RHEA:29427"/>
        <dbReference type="ChEBI" id="CHEBI:16244"/>
        <dbReference type="ChEBI" id="CHEBI:16347"/>
    </reaction>
</comment>
<comment type="pathway">
    <text evidence="1">Amine and polyamine metabolism; carnitine metabolism.</text>
</comment>
<comment type="subunit">
    <text evidence="1">Homotrimer.</text>
</comment>
<comment type="subcellular location">
    <subcellularLocation>
        <location evidence="1">Cell inner membrane</location>
        <topology evidence="1">Multi-pass membrane protein</topology>
    </subcellularLocation>
</comment>
<comment type="similarity">
    <text evidence="1">Belongs to the BCCT transporter (TC 2.A.15) family. CaiT subfamily.</text>
</comment>
<organism>
    <name type="scientific">Escherichia coli O6:K15:H31 (strain 536 / UPEC)</name>
    <dbReference type="NCBI Taxonomy" id="362663"/>
    <lineage>
        <taxon>Bacteria</taxon>
        <taxon>Pseudomonadati</taxon>
        <taxon>Pseudomonadota</taxon>
        <taxon>Gammaproteobacteria</taxon>
        <taxon>Enterobacterales</taxon>
        <taxon>Enterobacteriaceae</taxon>
        <taxon>Escherichia</taxon>
    </lineage>
</organism>
<reference key="1">
    <citation type="journal article" date="2006" name="Mol. Microbiol.">
        <title>Role of pathogenicity island-associated integrases in the genome plasticity of uropathogenic Escherichia coli strain 536.</title>
        <authorList>
            <person name="Hochhut B."/>
            <person name="Wilde C."/>
            <person name="Balling G."/>
            <person name="Middendorf B."/>
            <person name="Dobrindt U."/>
            <person name="Brzuszkiewicz E."/>
            <person name="Gottschalk G."/>
            <person name="Carniel E."/>
            <person name="Hacker J."/>
        </authorList>
    </citation>
    <scope>NUCLEOTIDE SEQUENCE [LARGE SCALE GENOMIC DNA]</scope>
    <source>
        <strain>536 / UPEC</strain>
    </source>
</reference>
<sequence>MKNEKRKTGIEPKVFFPPLIIVGILCWLTVRDLDAANVVINAVFSYVTNVWGWAFEWYMVVMLFGWFWLVFGPYAKKRLGNEPPEFSTASWIFMMFASCTSAAVLFWGSIEIYYYISTPPFGLEPNSTGAKELGLAYSLFHWGPLPWATYSFLSVAFAYFFFVRKMEVIRPSSTLVPLVGEKHAKGLFGTIVDNFYLVALIFAMGTSLGLATPLVTECMQWLFGIPHTLQLDAIIITCWIILNAICVACGLQKGVRIASDVRSYLSFLMLGWVFIVSGASFIMNYFTDSVGMLLMYLPRMLFYTDPIAKGGFPQGWTVFYWAWWVIYAIQMSIFLARISRGRTVRELCFGMVLGLTASTWILWTVLGSNTLLLIDKNIINIPNLIEQYGVARAIIETWAALPLSTATMWGFFILCFIATVTLVNACSYTLAMSTCREVRDGEEPPLLVRIGWSVLVGIIGIVLLALGGLKPIQTAIIAGGCPLFFVNIMVTLSFIKDAKQNWKD</sequence>
<evidence type="ECO:0000255" key="1">
    <source>
        <dbReference type="HAMAP-Rule" id="MF_01049"/>
    </source>
</evidence>
<gene>
    <name evidence="1" type="primary">caiT</name>
    <name type="ordered locus">ECP_0040</name>
</gene>
<accession>Q0TLU9</accession>
<name>CAIT_ECOL5</name>
<protein>
    <recommendedName>
        <fullName evidence="1">L-carnitine/gamma-butyrobetaine antiporter</fullName>
    </recommendedName>
</protein>